<dbReference type="EMBL" id="X93088">
    <property type="protein sequence ID" value="CAA63637.1"/>
    <property type="molecule type" value="mRNA"/>
</dbReference>
<dbReference type="RefSeq" id="NP_001165511.1">
    <property type="nucleotide sequence ID" value="NM_001172040.1"/>
</dbReference>
<dbReference type="SMR" id="P49877"/>
<dbReference type="FunCoup" id="P49877">
    <property type="interactions" value="322"/>
</dbReference>
<dbReference type="STRING" id="9913.ENSBTAP00000052390"/>
<dbReference type="PaxDb" id="9913-ENSBTAP00000036589"/>
<dbReference type="GeneID" id="100329206"/>
<dbReference type="KEGG" id="bta:100329206"/>
<dbReference type="CTD" id="100329206"/>
<dbReference type="eggNOG" id="ENOG502SQAC">
    <property type="taxonomic scope" value="Eukaryota"/>
</dbReference>
<dbReference type="InParanoid" id="P49877"/>
<dbReference type="OrthoDB" id="9708897at2759"/>
<dbReference type="Proteomes" id="UP000009136">
    <property type="component" value="Unplaced"/>
</dbReference>
<dbReference type="GO" id="GO:0005615">
    <property type="term" value="C:extracellular space"/>
    <property type="evidence" value="ECO:0000318"/>
    <property type="project" value="GO_Central"/>
</dbReference>
<dbReference type="GO" id="GO:0005125">
    <property type="term" value="F:cytokine activity"/>
    <property type="evidence" value="ECO:0000318"/>
    <property type="project" value="GO_Central"/>
</dbReference>
<dbReference type="GO" id="GO:0005132">
    <property type="term" value="F:type I interferon receptor binding"/>
    <property type="evidence" value="ECO:0000318"/>
    <property type="project" value="GO_Central"/>
</dbReference>
<dbReference type="GO" id="GO:0002250">
    <property type="term" value="P:adaptive immune response"/>
    <property type="evidence" value="ECO:0000318"/>
    <property type="project" value="GO_Central"/>
</dbReference>
<dbReference type="GO" id="GO:0002312">
    <property type="term" value="P:B cell activation involved in immune response"/>
    <property type="evidence" value="ECO:0000318"/>
    <property type="project" value="GO_Central"/>
</dbReference>
<dbReference type="GO" id="GO:0051607">
    <property type="term" value="P:defense response to virus"/>
    <property type="evidence" value="ECO:0007669"/>
    <property type="project" value="UniProtKB-KW"/>
</dbReference>
<dbReference type="GO" id="GO:0006959">
    <property type="term" value="P:humoral immune response"/>
    <property type="evidence" value="ECO:0000318"/>
    <property type="project" value="GO_Central"/>
</dbReference>
<dbReference type="GO" id="GO:0002323">
    <property type="term" value="P:natural killer cell activation involved in immune response"/>
    <property type="evidence" value="ECO:0000318"/>
    <property type="project" value="GO_Central"/>
</dbReference>
<dbReference type="GO" id="GO:0009891">
    <property type="term" value="P:positive regulation of biosynthetic process"/>
    <property type="evidence" value="ECO:0007669"/>
    <property type="project" value="UniProtKB-ARBA"/>
</dbReference>
<dbReference type="GO" id="GO:0043330">
    <property type="term" value="P:response to exogenous dsRNA"/>
    <property type="evidence" value="ECO:0000318"/>
    <property type="project" value="GO_Central"/>
</dbReference>
<dbReference type="GO" id="GO:0002286">
    <property type="term" value="P:T cell activation involved in immune response"/>
    <property type="evidence" value="ECO:0000318"/>
    <property type="project" value="GO_Central"/>
</dbReference>
<dbReference type="GO" id="GO:0060337">
    <property type="term" value="P:type I interferon-mediated signaling pathway"/>
    <property type="evidence" value="ECO:0000318"/>
    <property type="project" value="GO_Central"/>
</dbReference>
<dbReference type="CDD" id="cd00095">
    <property type="entry name" value="IFab"/>
    <property type="match status" value="1"/>
</dbReference>
<dbReference type="FunFam" id="1.20.1250.10:FF:000001">
    <property type="entry name" value="Interferon alpha"/>
    <property type="match status" value="1"/>
</dbReference>
<dbReference type="Gene3D" id="1.20.1250.10">
    <property type="match status" value="1"/>
</dbReference>
<dbReference type="InterPro" id="IPR009079">
    <property type="entry name" value="4_helix_cytokine-like_core"/>
</dbReference>
<dbReference type="InterPro" id="IPR000471">
    <property type="entry name" value="Interferon_alpha/beta/delta"/>
</dbReference>
<dbReference type="PANTHER" id="PTHR11691:SF60">
    <property type="entry name" value="INTERFERON ALPHA-5"/>
    <property type="match status" value="1"/>
</dbReference>
<dbReference type="PANTHER" id="PTHR11691">
    <property type="entry name" value="TYPE I INTERFERON"/>
    <property type="match status" value="1"/>
</dbReference>
<dbReference type="Pfam" id="PF00143">
    <property type="entry name" value="Interferon"/>
    <property type="match status" value="1"/>
</dbReference>
<dbReference type="PRINTS" id="PR00266">
    <property type="entry name" value="INTERFERONAB"/>
</dbReference>
<dbReference type="SMART" id="SM00076">
    <property type="entry name" value="IFabd"/>
    <property type="match status" value="1"/>
</dbReference>
<dbReference type="SUPFAM" id="SSF47266">
    <property type="entry name" value="4-helical cytokines"/>
    <property type="match status" value="1"/>
</dbReference>
<dbReference type="PROSITE" id="PS00252">
    <property type="entry name" value="INTERFERON_A_B_D"/>
    <property type="match status" value="1"/>
</dbReference>
<sequence>MAPAWSLLLALLLLSCNAICSLGCHLPHTHSLANRRVLTLLRQLRRVSPSSCLQDRNDFAFPQEALGGSQLQKAQAISVLHEVTQHTFQFFSVEGSAVVWDESLLDKLRDALDQQLTDLQFCLRQEEGLRGAPLLKEDSSLAVRKYFHRLTLYLQEKRHSPCAWEVVRAEVMRAFSSSTNLQERFRRKD</sequence>
<proteinExistence type="evidence at transcript level"/>
<accession>P49877</accession>
<reference key="1">
    <citation type="journal article" date="1996" name="Immunogenetics">
        <title>The cloning of cattle interferon-A subtypes isolated from the gut epithelium of rotavirus-infected calves.</title>
        <authorList>
            <person name="Chaplin P.J."/>
            <person name="Parsons K.R."/>
            <person name="Collins B.A."/>
        </authorList>
    </citation>
    <scope>NUCLEOTIDE SEQUENCE [MRNA]</scope>
    <source>
        <tissue>Intestine</tissue>
    </source>
</reference>
<comment type="function">
    <text>Produced by macrophages, IFN-alpha have antiviral activities. Interferon stimulates the production of two enzymes: a protein kinase and an oligoadenylate synthetase.</text>
</comment>
<comment type="subcellular location">
    <subcellularLocation>
        <location>Secreted</location>
    </subcellularLocation>
</comment>
<comment type="similarity">
    <text evidence="2">Belongs to the alpha/beta interferon family.</text>
</comment>
<keyword id="KW-0051">Antiviral defense</keyword>
<keyword id="KW-0202">Cytokine</keyword>
<keyword id="KW-1015">Disulfide bond</keyword>
<keyword id="KW-1185">Reference proteome</keyword>
<keyword id="KW-0964">Secreted</keyword>
<keyword id="KW-0732">Signal</keyword>
<protein>
    <recommendedName>
        <fullName>Interferon alpha-G</fullName>
    </recommendedName>
    <alternativeName>
        <fullName>IFN-alpha7</fullName>
    </alternativeName>
</protein>
<organism>
    <name type="scientific">Bos taurus</name>
    <name type="common">Bovine</name>
    <dbReference type="NCBI Taxonomy" id="9913"/>
    <lineage>
        <taxon>Eukaryota</taxon>
        <taxon>Metazoa</taxon>
        <taxon>Chordata</taxon>
        <taxon>Craniata</taxon>
        <taxon>Vertebrata</taxon>
        <taxon>Euteleostomi</taxon>
        <taxon>Mammalia</taxon>
        <taxon>Eutheria</taxon>
        <taxon>Laurasiatheria</taxon>
        <taxon>Artiodactyla</taxon>
        <taxon>Ruminantia</taxon>
        <taxon>Pecora</taxon>
        <taxon>Bovidae</taxon>
        <taxon>Bovinae</taxon>
        <taxon>Bos</taxon>
    </lineage>
</organism>
<evidence type="ECO:0000250" key="1"/>
<evidence type="ECO:0000305" key="2"/>
<feature type="signal peptide" evidence="1">
    <location>
        <begin position="1"/>
        <end position="23"/>
    </location>
</feature>
<feature type="chain" id="PRO_0000016390" description="Interferon alpha-G">
    <location>
        <begin position="24"/>
        <end position="189"/>
    </location>
</feature>
<feature type="disulfide bond" evidence="1">
    <location>
        <begin position="24"/>
        <end position="122"/>
    </location>
</feature>
<feature type="disulfide bond" evidence="1">
    <location>
        <begin position="52"/>
        <end position="162"/>
    </location>
</feature>
<name>IFNAG_BOVIN</name>
<gene>
    <name type="primary">IFNAG</name>
    <name type="synonym">IFNA7</name>
</gene>